<name>MFA2_YEAST</name>
<dbReference type="EMBL" id="U20823">
    <property type="protein sequence ID" value="AAA68602.1"/>
    <property type="molecule type" value="Genomic_DNA"/>
</dbReference>
<dbReference type="EMBL" id="U26204">
    <property type="protein sequence ID" value="AAA67688.1"/>
    <property type="molecule type" value="Genomic_DNA"/>
</dbReference>
<dbReference type="EMBL" id="Z46843">
    <property type="protein sequence ID" value="CAA86881.1"/>
    <property type="molecule type" value="Genomic_DNA"/>
</dbReference>
<dbReference type="EMBL" id="S48033">
    <property type="protein sequence ID" value="AAD13854.1"/>
    <property type="molecule type" value="mRNA"/>
</dbReference>
<dbReference type="EMBL" id="Z71421">
    <property type="protein sequence ID" value="CAA96028.1"/>
    <property type="molecule type" value="Genomic_DNA"/>
</dbReference>
<dbReference type="EMBL" id="AY693189">
    <property type="protein sequence ID" value="AAT93208.1"/>
    <property type="molecule type" value="Genomic_DNA"/>
</dbReference>
<dbReference type="EMBL" id="BK006947">
    <property type="protein sequence ID" value="DAA10404.1"/>
    <property type="molecule type" value="Genomic_DNA"/>
</dbReference>
<dbReference type="PIR" id="S55139">
    <property type="entry name" value="S55139"/>
</dbReference>
<dbReference type="RefSeq" id="NP_014254.1">
    <property type="nucleotide sequence ID" value="NM_001182983.1"/>
</dbReference>
<dbReference type="BioGRID" id="35683">
    <property type="interactions" value="94"/>
</dbReference>
<dbReference type="DIP" id="DIP-2140N"/>
<dbReference type="FunCoup" id="P34166">
    <property type="interactions" value="171"/>
</dbReference>
<dbReference type="IntAct" id="P34166">
    <property type="interactions" value="2"/>
</dbReference>
<dbReference type="STRING" id="4932.YNL145W"/>
<dbReference type="PaxDb" id="4932-YNL145W"/>
<dbReference type="PeptideAtlas" id="P34166"/>
<dbReference type="TopDownProteomics" id="P34166"/>
<dbReference type="EnsemblFungi" id="YNL145W_mRNA">
    <property type="protein sequence ID" value="YNL145W"/>
    <property type="gene ID" value="YNL145W"/>
</dbReference>
<dbReference type="GeneID" id="855577"/>
<dbReference type="KEGG" id="sce:YNL145W"/>
<dbReference type="AGR" id="SGD:S000005089"/>
<dbReference type="SGD" id="S000005089">
    <property type="gene designation" value="MFA2"/>
</dbReference>
<dbReference type="VEuPathDB" id="FungiDB:YNL145W"/>
<dbReference type="eggNOG" id="ENOG502SCDB">
    <property type="taxonomic scope" value="Eukaryota"/>
</dbReference>
<dbReference type="GeneTree" id="ENSGT00940000180742"/>
<dbReference type="HOGENOM" id="CLU_220658_0_0_1"/>
<dbReference type="InParanoid" id="P34166"/>
<dbReference type="OrthoDB" id="4028313at2759"/>
<dbReference type="BioCyc" id="YEAST:G3O-33163-MONOMER"/>
<dbReference type="BioGRID-ORCS" id="855577">
    <property type="hits" value="0 hits in 10 CRISPR screens"/>
</dbReference>
<dbReference type="PRO" id="PR:P34166"/>
<dbReference type="Proteomes" id="UP000002311">
    <property type="component" value="Chromosome XIV"/>
</dbReference>
<dbReference type="GO" id="GO:0005783">
    <property type="term" value="C:endoplasmic reticulum"/>
    <property type="evidence" value="ECO:0007005"/>
    <property type="project" value="SGD"/>
</dbReference>
<dbReference type="GO" id="GO:0005576">
    <property type="term" value="C:extracellular region"/>
    <property type="evidence" value="ECO:0000314"/>
    <property type="project" value="SGD"/>
</dbReference>
<dbReference type="GO" id="GO:0005886">
    <property type="term" value="C:plasma membrane"/>
    <property type="evidence" value="ECO:0007669"/>
    <property type="project" value="UniProtKB-SubCell"/>
</dbReference>
<dbReference type="GO" id="GO:0000772">
    <property type="term" value="F:mating pheromone activity"/>
    <property type="evidence" value="ECO:0000315"/>
    <property type="project" value="SGD"/>
</dbReference>
<dbReference type="GO" id="GO:0000750">
    <property type="term" value="P:pheromone-dependent signal transduction involved in conjugation with cellular fusion"/>
    <property type="evidence" value="ECO:0000315"/>
    <property type="project" value="SGD"/>
</dbReference>
<dbReference type="InterPro" id="IPR035296">
    <property type="entry name" value="Mfa1/2"/>
</dbReference>
<dbReference type="Pfam" id="PF17317">
    <property type="entry name" value="MFA1_2"/>
    <property type="match status" value="1"/>
</dbReference>
<comment type="function">
    <text>The active factor is excreted into the culture medium by haploid cells of the A mating type and acts on cells of the opposite mating type (type alpha). It mediates the conjugation process between the two types by inhibiting the initiation of DNA synthesis in type alpha cells and synchronizing them with type A.</text>
</comment>
<comment type="subcellular location">
    <subcellularLocation>
        <location evidence="4">Cell membrane</location>
        <topology evidence="4">Lipid-anchor</topology>
        <orientation evidence="4">Cytoplasmic side</orientation>
    </subcellularLocation>
</comment>
<reference key="1">
    <citation type="book" date="1985" name="Protein transport and secretion">
        <title>Structure of genes encoding precursors of the yeast peptide mating pheromone a-factor.</title>
        <editorList>
            <person name="Gething M.-J."/>
        </editorList>
        <authorList>
            <person name="Brake A.J."/>
            <person name="Brenner C."/>
            <person name="Najarian R."/>
            <person name="Laybourn P."/>
            <person name="Merryweather J."/>
        </authorList>
    </citation>
    <scope>NUCLEOTIDE SEQUENCE</scope>
</reference>
<reference key="2">
    <citation type="journal article" date="1988" name="Mol. Cell. Biol.">
        <title>The a-factor pheromone of Saccharomyces cerevisiae is essential for mating.</title>
        <authorList>
            <person name="Michaelis S."/>
            <person name="Herskowitz I."/>
        </authorList>
    </citation>
    <scope>NUCLEOTIDE SEQUENCE</scope>
</reference>
<reference key="3">
    <citation type="journal article" date="1992" name="Genes Dev.">
        <title>3'-UTR-dependent deadenylation by the yeast poly(A) nuclease.</title>
        <authorList>
            <person name="Lowell J.E."/>
            <person name="Rudner D.Z."/>
            <person name="Sachs A.B."/>
        </authorList>
    </citation>
    <scope>NUCLEOTIDE SEQUENCE [MRNA]</scope>
</reference>
<reference key="4">
    <citation type="journal article" date="1996" name="Yeast">
        <title>The sequence of 36.8 kb from the left arm of chromosome XIV reveals 24 complete open reading frames: 18 correspond to new genes, one of which encodes a protein similar to the human myotonic dystrophy kinase.</title>
        <authorList>
            <person name="Nasr F."/>
            <person name="Becam A.-M."/>
            <person name="Herbert C.J."/>
        </authorList>
    </citation>
    <scope>NUCLEOTIDE SEQUENCE</scope>
    <source>
        <strain>ATCC 96604 / S288c / FY1679</strain>
    </source>
</reference>
<reference key="5">
    <citation type="journal article" date="1995" name="Yeast">
        <title>A 43.5 kb segment of yeast chromosome XIV, which contains MFA2, MEP2, CAP/SRV2, NAM9, FKB1/FPR1/RBP1, MOM22 and CPT1, predicts an adenosine deaminase gene and 14 new open reading frames.</title>
        <authorList>
            <person name="Mallet L."/>
            <person name="Bussereau F."/>
            <person name="Jacquet M."/>
        </authorList>
    </citation>
    <scope>NUCLEOTIDE SEQUENCE [GENOMIC DNA]</scope>
    <source>
        <strain>ATCC 204508 / S288c</strain>
    </source>
</reference>
<reference key="6">
    <citation type="journal article" date="1997" name="Nature">
        <title>The nucleotide sequence of Saccharomyces cerevisiae chromosome XIV and its evolutionary implications.</title>
        <authorList>
            <person name="Philippsen P."/>
            <person name="Kleine K."/>
            <person name="Poehlmann R."/>
            <person name="Duesterhoeft A."/>
            <person name="Hamberg K."/>
            <person name="Hegemann J.H."/>
            <person name="Obermaier B."/>
            <person name="Urrestarazu L.A."/>
            <person name="Aert R."/>
            <person name="Albermann K."/>
            <person name="Altmann R."/>
            <person name="Andre B."/>
            <person name="Baladron V."/>
            <person name="Ballesta J.P.G."/>
            <person name="Becam A.-M."/>
            <person name="Beinhauer J.D."/>
            <person name="Boskovic J."/>
            <person name="Buitrago M.J."/>
            <person name="Bussereau F."/>
            <person name="Coster F."/>
            <person name="Crouzet M."/>
            <person name="D'Angelo M."/>
            <person name="Dal Pero F."/>
            <person name="De Antoni A."/>
            <person name="del Rey F."/>
            <person name="Doignon F."/>
            <person name="Domdey H."/>
            <person name="Dubois E."/>
            <person name="Fiedler T.A."/>
            <person name="Fleig U."/>
            <person name="Floeth M."/>
            <person name="Fritz C."/>
            <person name="Gaillardin C."/>
            <person name="Garcia-Cantalejo J.M."/>
            <person name="Glansdorff N."/>
            <person name="Goffeau A."/>
            <person name="Gueldener U."/>
            <person name="Herbert C.J."/>
            <person name="Heumann K."/>
            <person name="Heuss-Neitzel D."/>
            <person name="Hilbert H."/>
            <person name="Hinni K."/>
            <person name="Iraqui Houssaini I."/>
            <person name="Jacquet M."/>
            <person name="Jimenez A."/>
            <person name="Jonniaux J.-L."/>
            <person name="Karpfinger-Hartl L."/>
            <person name="Lanfranchi G."/>
            <person name="Lepingle A."/>
            <person name="Levesque H."/>
            <person name="Lyck R."/>
            <person name="Maftahi M."/>
            <person name="Mallet L."/>
            <person name="Maurer C.T.C."/>
            <person name="Messenguy F."/>
            <person name="Mewes H.-W."/>
            <person name="Moestl D."/>
            <person name="Nasr F."/>
            <person name="Nicaud J.-M."/>
            <person name="Niedenthal R.K."/>
            <person name="Pandolfo D."/>
            <person name="Pierard A."/>
            <person name="Piravandi E."/>
            <person name="Planta R.J."/>
            <person name="Pohl T.M."/>
            <person name="Purnelle B."/>
            <person name="Rebischung C."/>
            <person name="Remacha M.A."/>
            <person name="Revuelta J.L."/>
            <person name="Rinke M."/>
            <person name="Saiz J.E."/>
            <person name="Sartorello F."/>
            <person name="Scherens B."/>
            <person name="Sen-Gupta M."/>
            <person name="Soler-Mira A."/>
            <person name="Urbanus J.H.M."/>
            <person name="Valle G."/>
            <person name="Van Dyck L."/>
            <person name="Verhasselt P."/>
            <person name="Vierendeels F."/>
            <person name="Vissers S."/>
            <person name="Voet M."/>
            <person name="Volckaert G."/>
            <person name="Wach A."/>
            <person name="Wambutt R."/>
            <person name="Wedler H."/>
            <person name="Zollner A."/>
            <person name="Hani J."/>
        </authorList>
    </citation>
    <scope>NUCLEOTIDE SEQUENCE [LARGE SCALE GENOMIC DNA]</scope>
    <source>
        <strain>ATCC 204508 / S288c</strain>
    </source>
</reference>
<reference key="7">
    <citation type="journal article" date="2014" name="G3 (Bethesda)">
        <title>The reference genome sequence of Saccharomyces cerevisiae: Then and now.</title>
        <authorList>
            <person name="Engel S.R."/>
            <person name="Dietrich F.S."/>
            <person name="Fisk D.G."/>
            <person name="Binkley G."/>
            <person name="Balakrishnan R."/>
            <person name="Costanzo M.C."/>
            <person name="Dwight S.S."/>
            <person name="Hitz B.C."/>
            <person name="Karra K."/>
            <person name="Nash R.S."/>
            <person name="Weng S."/>
            <person name="Wong E.D."/>
            <person name="Lloyd P."/>
            <person name="Skrzypek M.S."/>
            <person name="Miyasato S.R."/>
            <person name="Simison M."/>
            <person name="Cherry J.M."/>
        </authorList>
    </citation>
    <scope>GENOME REANNOTATION</scope>
    <source>
        <strain>ATCC 204508 / S288c</strain>
    </source>
</reference>
<reference key="8">
    <citation type="journal article" date="2007" name="Genome Res.">
        <title>Approaching a complete repository of sequence-verified protein-encoding clones for Saccharomyces cerevisiae.</title>
        <authorList>
            <person name="Hu Y."/>
            <person name="Rolfs A."/>
            <person name="Bhullar B."/>
            <person name="Murthy T.V.S."/>
            <person name="Zhu C."/>
            <person name="Berger M.F."/>
            <person name="Camargo A.A."/>
            <person name="Kelley F."/>
            <person name="McCarron S."/>
            <person name="Jepson D."/>
            <person name="Richardson A."/>
            <person name="Raphael J."/>
            <person name="Moreira D."/>
            <person name="Taycher E."/>
            <person name="Zuo D."/>
            <person name="Mohr S."/>
            <person name="Kane M.F."/>
            <person name="Williamson J."/>
            <person name="Simpson A.J.G."/>
            <person name="Bulyk M.L."/>
            <person name="Harlow E."/>
            <person name="Marsischky G."/>
            <person name="Kolodner R.D."/>
            <person name="LaBaer J."/>
        </authorList>
    </citation>
    <scope>NUCLEOTIDE SEQUENCE [GENOMIC DNA]</scope>
    <source>
        <strain>ATCC 204508 / S288c</strain>
    </source>
</reference>
<reference key="9">
    <citation type="journal article" date="1987" name="J. Biol. Chem.">
        <title>Amino acid sequences of a-factor mating peptides from Saccharomyces cerevisiae.</title>
        <authorList>
            <person name="Betz R."/>
            <person name="Crabb J.W."/>
            <person name="Meyer H.E."/>
            <person name="Wittig R."/>
            <person name="Duntze W."/>
        </authorList>
    </citation>
    <scope>PROTEIN SEQUENCE OF 24-35</scope>
</reference>
<reference key="10">
    <citation type="journal article" date="1988" name="J. Biol. Chem.">
        <title>Structure of Saccharomyces cerevisiae mating hormone a-factor. Identification of S-farnesyl cysteine as a structural component.</title>
        <authorList>
            <person name="Anderegg R.J."/>
            <person name="Betz R."/>
            <person name="Carr S.A."/>
            <person name="Crabb J.W."/>
            <person name="Duntze W."/>
        </authorList>
    </citation>
    <scope>ISOPRENYLATION AT CYS-35</scope>
    <scope>METHYLATION AT CYS-35</scope>
</reference>
<protein>
    <recommendedName>
        <fullName>Mating hormone A-factor 2</fullName>
    </recommendedName>
</protein>
<keyword id="KW-1003">Cell membrane</keyword>
<keyword id="KW-0903">Direct protein sequencing</keyword>
<keyword id="KW-0449">Lipoprotein</keyword>
<keyword id="KW-0472">Membrane</keyword>
<keyword id="KW-0488">Methylation</keyword>
<keyword id="KW-0588">Pheromone</keyword>
<keyword id="KW-0636">Prenylation</keyword>
<keyword id="KW-1185">Reference proteome</keyword>
<gene>
    <name type="primary">MFA2</name>
    <name type="ordered locus">YNL145W</name>
    <name type="ORF">N1204</name>
    <name type="ORF">N1787</name>
</gene>
<organism>
    <name type="scientific">Saccharomyces cerevisiae (strain ATCC 204508 / S288c)</name>
    <name type="common">Baker's yeast</name>
    <dbReference type="NCBI Taxonomy" id="559292"/>
    <lineage>
        <taxon>Eukaryota</taxon>
        <taxon>Fungi</taxon>
        <taxon>Dikarya</taxon>
        <taxon>Ascomycota</taxon>
        <taxon>Saccharomycotina</taxon>
        <taxon>Saccharomycetes</taxon>
        <taxon>Saccharomycetales</taxon>
        <taxon>Saccharomycetaceae</taxon>
        <taxon>Saccharomyces</taxon>
    </lineage>
</organism>
<accession>P34166</accession>
<accession>D6W138</accession>
<feature type="propeptide" id="PRO_0000021693" evidence="3">
    <location>
        <begin position="1"/>
        <end position="23"/>
    </location>
</feature>
<feature type="peptide" id="PRO_0000021694" description="Mating hormone A-factor 2">
    <location>
        <begin position="24"/>
        <end position="35"/>
    </location>
</feature>
<feature type="propeptide" id="PRO_0000021695" description="Removed in mature form">
    <location>
        <begin position="36"/>
        <end position="38"/>
    </location>
</feature>
<feature type="region of interest" description="Disordered" evidence="1">
    <location>
        <begin position="1"/>
        <end position="20"/>
    </location>
</feature>
<feature type="compositionally biased region" description="Polar residues" evidence="1">
    <location>
        <begin position="1"/>
        <end position="12"/>
    </location>
</feature>
<feature type="modified residue" description="Cysteine methyl ester" evidence="2">
    <location>
        <position position="35"/>
    </location>
</feature>
<feature type="lipid moiety-binding region" description="S-farnesyl cysteine" evidence="2">
    <location>
        <position position="35"/>
    </location>
</feature>
<evidence type="ECO:0000256" key="1">
    <source>
        <dbReference type="SAM" id="MobiDB-lite"/>
    </source>
</evidence>
<evidence type="ECO:0000269" key="2">
    <source>
    </source>
</evidence>
<evidence type="ECO:0000269" key="3">
    <source>
    </source>
</evidence>
<evidence type="ECO:0000305" key="4"/>
<sequence>MQPITTASTQATQKDKSSEKKDNYIIKGLFWDPACVIA</sequence>
<proteinExistence type="evidence at protein level"/>